<sequence length="547" mass="57288">MAKIIAFDEEARRGLEKGLNTLADAVKVTLGPKGRNVVLEKAWGAPTITNDGVTIAREIELEDPYEKIGAELVKEVAKKTDDVAGDGTTTATVLAQALVKEGLRNVAAGSNPMGIKRGIEQAVATVTEKLLESAKEVETEEQIAATAGISAADPAIGAQIAKAMYAVGGGKLNKDSVITVEESNTFGVELEVTEGMRFDKGYISGYFATDMERLEAVLEDPYILLVSGKISNIKDLLPLLEKVMQSGKPLLIIAEDVEGEALSTLVVNKIRGTFKSVAVKAPGFGDRRKAQLQDIAILTGGQVISEEVGLSLETADLPLLGQARKVVVTKDDTTIVDGAGSEEQIEGRVNQIRAEIENSDSDYDREKLNERLAKLAGGVAVLKVGAATEVELKERKHRIEDAVRNAKAAVEEGIVAGGGVALIQAAHVLDNDLDLTGDEATGVRIVRDALTAPLKQIAANAGLEPGVVADKVSRLPEGEGLNAATGEYVDLMAAGINDPVKVTRSALQNAASIAALFLTTEAVVADKPQPAGAAMPGADEMGGMGGF</sequence>
<dbReference type="EC" id="5.6.1.7" evidence="1"/>
<dbReference type="EMBL" id="BA000035">
    <property type="protein sequence ID" value="BAC19371.1"/>
    <property type="molecule type" value="Genomic_DNA"/>
</dbReference>
<dbReference type="RefSeq" id="WP_006769076.1">
    <property type="nucleotide sequence ID" value="NC_004369.1"/>
</dbReference>
<dbReference type="SMR" id="Q8CY22"/>
<dbReference type="STRING" id="196164.gene:10743008"/>
<dbReference type="KEGG" id="cef:CE2561"/>
<dbReference type="eggNOG" id="COG0459">
    <property type="taxonomic scope" value="Bacteria"/>
</dbReference>
<dbReference type="HOGENOM" id="CLU_016503_3_0_11"/>
<dbReference type="OrthoDB" id="9766614at2"/>
<dbReference type="Proteomes" id="UP000001409">
    <property type="component" value="Chromosome"/>
</dbReference>
<dbReference type="GO" id="GO:0005737">
    <property type="term" value="C:cytoplasm"/>
    <property type="evidence" value="ECO:0007669"/>
    <property type="project" value="UniProtKB-SubCell"/>
</dbReference>
<dbReference type="GO" id="GO:0005524">
    <property type="term" value="F:ATP binding"/>
    <property type="evidence" value="ECO:0007669"/>
    <property type="project" value="UniProtKB-UniRule"/>
</dbReference>
<dbReference type="GO" id="GO:0140662">
    <property type="term" value="F:ATP-dependent protein folding chaperone"/>
    <property type="evidence" value="ECO:0007669"/>
    <property type="project" value="InterPro"/>
</dbReference>
<dbReference type="GO" id="GO:0016853">
    <property type="term" value="F:isomerase activity"/>
    <property type="evidence" value="ECO:0007669"/>
    <property type="project" value="UniProtKB-KW"/>
</dbReference>
<dbReference type="GO" id="GO:0051082">
    <property type="term" value="F:unfolded protein binding"/>
    <property type="evidence" value="ECO:0007669"/>
    <property type="project" value="UniProtKB-UniRule"/>
</dbReference>
<dbReference type="GO" id="GO:0042026">
    <property type="term" value="P:protein refolding"/>
    <property type="evidence" value="ECO:0007669"/>
    <property type="project" value="UniProtKB-UniRule"/>
</dbReference>
<dbReference type="CDD" id="cd03344">
    <property type="entry name" value="GroEL"/>
    <property type="match status" value="1"/>
</dbReference>
<dbReference type="FunFam" id="3.50.7.10:FF:000001">
    <property type="entry name" value="60 kDa chaperonin"/>
    <property type="match status" value="1"/>
</dbReference>
<dbReference type="Gene3D" id="3.50.7.10">
    <property type="entry name" value="GroEL"/>
    <property type="match status" value="1"/>
</dbReference>
<dbReference type="Gene3D" id="1.10.560.10">
    <property type="entry name" value="GroEL-like equatorial domain"/>
    <property type="match status" value="1"/>
</dbReference>
<dbReference type="Gene3D" id="3.30.260.10">
    <property type="entry name" value="TCP-1-like chaperonin intermediate domain"/>
    <property type="match status" value="1"/>
</dbReference>
<dbReference type="HAMAP" id="MF_00600">
    <property type="entry name" value="CH60"/>
    <property type="match status" value="1"/>
</dbReference>
<dbReference type="InterPro" id="IPR018370">
    <property type="entry name" value="Chaperonin_Cpn60_CS"/>
</dbReference>
<dbReference type="InterPro" id="IPR001844">
    <property type="entry name" value="Cpn60/GroEL"/>
</dbReference>
<dbReference type="InterPro" id="IPR002423">
    <property type="entry name" value="Cpn60/GroEL/TCP-1"/>
</dbReference>
<dbReference type="InterPro" id="IPR027409">
    <property type="entry name" value="GroEL-like_apical_dom_sf"/>
</dbReference>
<dbReference type="InterPro" id="IPR027413">
    <property type="entry name" value="GROEL-like_equatorial_sf"/>
</dbReference>
<dbReference type="InterPro" id="IPR027410">
    <property type="entry name" value="TCP-1-like_intermed_sf"/>
</dbReference>
<dbReference type="NCBIfam" id="TIGR02348">
    <property type="entry name" value="GroEL"/>
    <property type="match status" value="1"/>
</dbReference>
<dbReference type="NCBIfam" id="NF000592">
    <property type="entry name" value="PRK00013.1"/>
    <property type="match status" value="1"/>
</dbReference>
<dbReference type="NCBIfam" id="NF009487">
    <property type="entry name" value="PRK12849.1"/>
    <property type="match status" value="1"/>
</dbReference>
<dbReference type="NCBIfam" id="NF009488">
    <property type="entry name" value="PRK12850.1"/>
    <property type="match status" value="1"/>
</dbReference>
<dbReference type="NCBIfam" id="NF009489">
    <property type="entry name" value="PRK12851.1"/>
    <property type="match status" value="1"/>
</dbReference>
<dbReference type="PANTHER" id="PTHR45633">
    <property type="entry name" value="60 KDA HEAT SHOCK PROTEIN, MITOCHONDRIAL"/>
    <property type="match status" value="1"/>
</dbReference>
<dbReference type="Pfam" id="PF00118">
    <property type="entry name" value="Cpn60_TCP1"/>
    <property type="match status" value="1"/>
</dbReference>
<dbReference type="PRINTS" id="PR00298">
    <property type="entry name" value="CHAPERONIN60"/>
</dbReference>
<dbReference type="SUPFAM" id="SSF52029">
    <property type="entry name" value="GroEL apical domain-like"/>
    <property type="match status" value="1"/>
</dbReference>
<dbReference type="SUPFAM" id="SSF48592">
    <property type="entry name" value="GroEL equatorial domain-like"/>
    <property type="match status" value="1"/>
</dbReference>
<dbReference type="SUPFAM" id="SSF54849">
    <property type="entry name" value="GroEL-intermediate domain like"/>
    <property type="match status" value="1"/>
</dbReference>
<dbReference type="PROSITE" id="PS00296">
    <property type="entry name" value="CHAPERONINS_CPN60"/>
    <property type="match status" value="1"/>
</dbReference>
<gene>
    <name evidence="1" type="primary">groEL2</name>
    <name evidence="1" type="synonym">groL2</name>
    <name type="ordered locus">CE2561</name>
</gene>
<proteinExistence type="inferred from homology"/>
<accession>Q8CY22</accession>
<feature type="chain" id="PRO_0000063350" description="Chaperonin GroEL 2">
    <location>
        <begin position="1"/>
        <end position="547"/>
    </location>
</feature>
<feature type="binding site" evidence="1">
    <location>
        <begin position="29"/>
        <end position="32"/>
    </location>
    <ligand>
        <name>ATP</name>
        <dbReference type="ChEBI" id="CHEBI:30616"/>
    </ligand>
</feature>
<feature type="binding site" evidence="1">
    <location>
        <begin position="86"/>
        <end position="90"/>
    </location>
    <ligand>
        <name>ATP</name>
        <dbReference type="ChEBI" id="CHEBI:30616"/>
    </ligand>
</feature>
<feature type="binding site" evidence="1">
    <location>
        <position position="418"/>
    </location>
    <ligand>
        <name>ATP</name>
        <dbReference type="ChEBI" id="CHEBI:30616"/>
    </ligand>
</feature>
<feature type="binding site" evidence="1">
    <location>
        <begin position="482"/>
        <end position="484"/>
    </location>
    <ligand>
        <name>ATP</name>
        <dbReference type="ChEBI" id="CHEBI:30616"/>
    </ligand>
</feature>
<feature type="binding site" evidence="1">
    <location>
        <position position="498"/>
    </location>
    <ligand>
        <name>ATP</name>
        <dbReference type="ChEBI" id="CHEBI:30616"/>
    </ligand>
</feature>
<evidence type="ECO:0000255" key="1">
    <source>
        <dbReference type="HAMAP-Rule" id="MF_00600"/>
    </source>
</evidence>
<name>CH602_COREF</name>
<organism>
    <name type="scientific">Corynebacterium efficiens (strain DSM 44549 / YS-314 / AJ 12310 / JCM 11189 / NBRC 100395)</name>
    <dbReference type="NCBI Taxonomy" id="196164"/>
    <lineage>
        <taxon>Bacteria</taxon>
        <taxon>Bacillati</taxon>
        <taxon>Actinomycetota</taxon>
        <taxon>Actinomycetes</taxon>
        <taxon>Mycobacteriales</taxon>
        <taxon>Corynebacteriaceae</taxon>
        <taxon>Corynebacterium</taxon>
    </lineage>
</organism>
<protein>
    <recommendedName>
        <fullName evidence="1">Chaperonin GroEL 2</fullName>
        <ecNumber evidence="1">5.6.1.7</ecNumber>
    </recommendedName>
    <alternativeName>
        <fullName evidence="1">60 kDa chaperonin 2</fullName>
    </alternativeName>
    <alternativeName>
        <fullName evidence="1">Chaperonin-60 2</fullName>
        <shortName evidence="1">Cpn60 2</shortName>
    </alternativeName>
</protein>
<comment type="function">
    <text evidence="1">Together with its co-chaperonin GroES, plays an essential role in assisting protein folding. The GroEL-GroES system forms a nano-cage that allows encapsulation of the non-native substrate proteins and provides a physical environment optimized to promote and accelerate protein folding.</text>
</comment>
<comment type="catalytic activity">
    <reaction evidence="1">
        <text>ATP + H2O + a folded polypeptide = ADP + phosphate + an unfolded polypeptide.</text>
        <dbReference type="EC" id="5.6.1.7"/>
    </reaction>
</comment>
<comment type="subunit">
    <text evidence="1">Forms a cylinder of 14 subunits composed of two heptameric rings stacked back-to-back. Interacts with the co-chaperonin GroES.</text>
</comment>
<comment type="subcellular location">
    <subcellularLocation>
        <location evidence="1">Cytoplasm</location>
    </subcellularLocation>
</comment>
<comment type="similarity">
    <text evidence="1">Belongs to the chaperonin (HSP60) family.</text>
</comment>
<keyword id="KW-0067">ATP-binding</keyword>
<keyword id="KW-0143">Chaperone</keyword>
<keyword id="KW-0963">Cytoplasm</keyword>
<keyword id="KW-0413">Isomerase</keyword>
<keyword id="KW-0547">Nucleotide-binding</keyword>
<keyword id="KW-1185">Reference proteome</keyword>
<reference key="1">
    <citation type="journal article" date="2003" name="Genome Res.">
        <title>Comparative complete genome sequence analysis of the amino acid replacements responsible for the thermostability of Corynebacterium efficiens.</title>
        <authorList>
            <person name="Nishio Y."/>
            <person name="Nakamura Y."/>
            <person name="Kawarabayasi Y."/>
            <person name="Usuda Y."/>
            <person name="Kimura E."/>
            <person name="Sugimoto S."/>
            <person name="Matsui K."/>
            <person name="Yamagishi A."/>
            <person name="Kikuchi H."/>
            <person name="Ikeo K."/>
            <person name="Gojobori T."/>
        </authorList>
    </citation>
    <scope>NUCLEOTIDE SEQUENCE [LARGE SCALE GENOMIC DNA]</scope>
    <source>
        <strain>DSM 44549 / YS-314 / AJ 12310 / JCM 11189 / NBRC 100395</strain>
    </source>
</reference>